<organism>
    <name type="scientific">Clupea pallasii</name>
    <name type="common">Pacific herring</name>
    <dbReference type="NCBI Taxonomy" id="30724"/>
    <lineage>
        <taxon>Eukaryota</taxon>
        <taxon>Metazoa</taxon>
        <taxon>Chordata</taxon>
        <taxon>Craniata</taxon>
        <taxon>Vertebrata</taxon>
        <taxon>Euteleostomi</taxon>
        <taxon>Actinopterygii</taxon>
        <taxon>Neopterygii</taxon>
        <taxon>Teleostei</taxon>
        <taxon>Clupei</taxon>
        <taxon>Clupeiformes</taxon>
        <taxon>Clupeoidei</taxon>
        <taxon>Clupeidae</taxon>
        <taxon>Clupea</taxon>
    </lineage>
</organism>
<protein>
    <recommendedName>
        <fullName>Gonadotropin subunit beta-2</fullName>
    </recommendedName>
    <alternativeName>
        <fullName>GTH-II-beta</fullName>
    </alternativeName>
    <alternativeName>
        <fullName>Gonadotropin beta-II chain</fullName>
    </alternativeName>
</protein>
<feature type="signal peptide" evidence="2">
    <location>
        <begin position="1"/>
        <end position="24"/>
    </location>
</feature>
<feature type="chain" id="PRO_0000011684" description="Gonadotropin subunit beta-2">
    <location>
        <begin position="25"/>
        <end position="149"/>
    </location>
</feature>
<feature type="glycosylation site" description="N-linked (GlcNAc...) asparagine" evidence="2">
    <location>
        <position position="34"/>
    </location>
</feature>
<feature type="disulfide bond" evidence="1">
    <location>
        <begin position="30"/>
        <end position="78"/>
    </location>
</feature>
<feature type="disulfide bond" evidence="1">
    <location>
        <begin position="44"/>
        <end position="93"/>
    </location>
</feature>
<feature type="disulfide bond" evidence="1">
    <location>
        <begin position="47"/>
        <end position="131"/>
    </location>
</feature>
<feature type="disulfide bond" evidence="1">
    <location>
        <begin position="55"/>
        <end position="109"/>
    </location>
</feature>
<feature type="disulfide bond" evidence="1">
    <location>
        <begin position="59"/>
        <end position="111"/>
    </location>
</feature>
<feature type="disulfide bond" evidence="1">
    <location>
        <begin position="114"/>
        <end position="121"/>
    </location>
</feature>
<reference key="1">
    <citation type="journal article" date="1997" name="J. Fish Biol.">
        <title>Isolation and characterization of a cDNA for gonadotropin II-beta of Pacific herring, an ancient teleost.</title>
        <authorList>
            <person name="Power M.E."/>
            <person name="Carolsfield J."/>
            <person name="Wallis G.P."/>
            <person name="Sherwood N.M."/>
        </authorList>
    </citation>
    <scope>NUCLEOTIDE SEQUENCE [MRNA]</scope>
    <source>
        <tissue>Pituitary</tissue>
    </source>
</reference>
<proteinExistence type="evidence at transcript level"/>
<evidence type="ECO:0000250" key="1"/>
<evidence type="ECO:0000255" key="2"/>
<evidence type="ECO:0000305" key="3"/>
<name>GTHB2_CLUPA</name>
<dbReference type="EMBL" id="X91984">
    <property type="protein sequence ID" value="CAA63038.1"/>
    <property type="molecule type" value="mRNA"/>
</dbReference>
<dbReference type="SMR" id="Q9YGH2"/>
<dbReference type="GlyCosmos" id="Q9YGH2">
    <property type="glycosylation" value="1 site, No reported glycans"/>
</dbReference>
<dbReference type="GO" id="GO:0005737">
    <property type="term" value="C:cytoplasm"/>
    <property type="evidence" value="ECO:0007669"/>
    <property type="project" value="TreeGrafter"/>
</dbReference>
<dbReference type="GO" id="GO:0005615">
    <property type="term" value="C:extracellular space"/>
    <property type="evidence" value="ECO:0007669"/>
    <property type="project" value="TreeGrafter"/>
</dbReference>
<dbReference type="GO" id="GO:0005179">
    <property type="term" value="F:hormone activity"/>
    <property type="evidence" value="ECO:0007669"/>
    <property type="project" value="UniProtKB-KW"/>
</dbReference>
<dbReference type="GO" id="GO:0007186">
    <property type="term" value="P:G protein-coupled receptor signaling pathway"/>
    <property type="evidence" value="ECO:0007669"/>
    <property type="project" value="TreeGrafter"/>
</dbReference>
<dbReference type="CDD" id="cd00069">
    <property type="entry name" value="GHB_like"/>
    <property type="match status" value="1"/>
</dbReference>
<dbReference type="FunFam" id="2.10.90.10:FF:000007">
    <property type="entry name" value="Luteinizing hormone beta subunit"/>
    <property type="match status" value="1"/>
</dbReference>
<dbReference type="Gene3D" id="2.10.90.10">
    <property type="entry name" value="Cystine-knot cytokines"/>
    <property type="match status" value="1"/>
</dbReference>
<dbReference type="InterPro" id="IPR029034">
    <property type="entry name" value="Cystine-knot_cytokine"/>
</dbReference>
<dbReference type="InterPro" id="IPR006208">
    <property type="entry name" value="Glyco_hormone_CN"/>
</dbReference>
<dbReference type="InterPro" id="IPR001545">
    <property type="entry name" value="Gonadotropin_bsu"/>
</dbReference>
<dbReference type="InterPro" id="IPR018245">
    <property type="entry name" value="Gonadotropin_bsu_CS"/>
</dbReference>
<dbReference type="PANTHER" id="PTHR11515">
    <property type="entry name" value="GLYCOPROTEIN HORMONE BETA CHAIN"/>
    <property type="match status" value="1"/>
</dbReference>
<dbReference type="PANTHER" id="PTHR11515:SF11">
    <property type="entry name" value="LUTROPIN SUBUNIT BETA"/>
    <property type="match status" value="1"/>
</dbReference>
<dbReference type="Pfam" id="PF00007">
    <property type="entry name" value="Cys_knot"/>
    <property type="match status" value="1"/>
</dbReference>
<dbReference type="SMART" id="SM00068">
    <property type="entry name" value="GHB"/>
    <property type="match status" value="1"/>
</dbReference>
<dbReference type="SUPFAM" id="SSF57501">
    <property type="entry name" value="Cystine-knot cytokines"/>
    <property type="match status" value="1"/>
</dbReference>
<dbReference type="PROSITE" id="PS00261">
    <property type="entry name" value="GLYCO_HORMONE_BETA_1"/>
    <property type="match status" value="1"/>
</dbReference>
<dbReference type="PROSITE" id="PS00689">
    <property type="entry name" value="GLYCO_HORMONE_BETA_2"/>
    <property type="match status" value="1"/>
</dbReference>
<accession>Q9YGH2</accession>
<gene>
    <name type="primary">cgbb</name>
</gene>
<sequence length="149" mass="16627">MARIPECTILLLLCMCVLAVPAQCFNLQPCVLVNETVSVEKEGCPRCLVFRTTICSGHCPTKEPVYKSPFSVVNQHVCTYGNFRYETIRLPDCADGVDPLVTYPVALSCECSLCSMDTSDCTIESVEPDFCMSQRLPVYESQKPSLYDY</sequence>
<keyword id="KW-1015">Disulfide bond</keyword>
<keyword id="KW-0325">Glycoprotein</keyword>
<keyword id="KW-0372">Hormone</keyword>
<keyword id="KW-0964">Secreted</keyword>
<keyword id="KW-0732">Signal</keyword>
<comment type="function">
    <text>Involved in gametogenesis and steroidogenesis.</text>
</comment>
<comment type="subunit">
    <text>Heterodimer of an alpha and a beta chain.</text>
</comment>
<comment type="subcellular location">
    <subcellularLocation>
        <location>Secreted</location>
    </subcellularLocation>
</comment>
<comment type="similarity">
    <text evidence="3">Belongs to the glycoprotein hormones subunit beta family.</text>
</comment>